<proteinExistence type="inferred from homology"/>
<protein>
    <recommendedName>
        <fullName evidence="1">Phosphoenolpyruvate carboxylase</fullName>
        <shortName evidence="1">PEPC</shortName>
        <shortName evidence="1">PEPCase</shortName>
        <ecNumber evidence="1">4.1.1.31</ecNumber>
    </recommendedName>
</protein>
<evidence type="ECO:0000255" key="1">
    <source>
        <dbReference type="HAMAP-Rule" id="MF_00595"/>
    </source>
</evidence>
<organism>
    <name type="scientific">Pseudomonas entomophila (strain L48)</name>
    <dbReference type="NCBI Taxonomy" id="384676"/>
    <lineage>
        <taxon>Bacteria</taxon>
        <taxon>Pseudomonadati</taxon>
        <taxon>Pseudomonadota</taxon>
        <taxon>Gammaproteobacteria</taxon>
        <taxon>Pseudomonadales</taxon>
        <taxon>Pseudomonadaceae</taxon>
        <taxon>Pseudomonas</taxon>
    </lineage>
</organism>
<comment type="function">
    <text evidence="1">Forms oxaloacetate, a four-carbon dicarboxylic acid source for the tricarboxylic acid cycle.</text>
</comment>
<comment type="catalytic activity">
    <reaction evidence="1">
        <text>oxaloacetate + phosphate = phosphoenolpyruvate + hydrogencarbonate</text>
        <dbReference type="Rhea" id="RHEA:28370"/>
        <dbReference type="ChEBI" id="CHEBI:16452"/>
        <dbReference type="ChEBI" id="CHEBI:17544"/>
        <dbReference type="ChEBI" id="CHEBI:43474"/>
        <dbReference type="ChEBI" id="CHEBI:58702"/>
        <dbReference type="EC" id="4.1.1.31"/>
    </reaction>
</comment>
<comment type="cofactor">
    <cofactor evidence="1">
        <name>Mg(2+)</name>
        <dbReference type="ChEBI" id="CHEBI:18420"/>
    </cofactor>
</comment>
<comment type="similarity">
    <text evidence="1">Belongs to the PEPCase type 1 family.</text>
</comment>
<feature type="chain" id="PRO_1000025576" description="Phosphoenolpyruvate carboxylase">
    <location>
        <begin position="1"/>
        <end position="875"/>
    </location>
</feature>
<feature type="active site" evidence="1">
    <location>
        <position position="137"/>
    </location>
</feature>
<feature type="active site" evidence="1">
    <location>
        <position position="542"/>
    </location>
</feature>
<gene>
    <name evidence="1" type="primary">ppc</name>
    <name type="ordered locus">PSEEN1264</name>
</gene>
<accession>Q1IDV2</accession>
<keyword id="KW-0120">Carbon dioxide fixation</keyword>
<keyword id="KW-0456">Lyase</keyword>
<keyword id="KW-0460">Magnesium</keyword>
<sequence>MSDIDQRLREDVHLLGELLGETIRQQHGEAFLQKIEDIRHSAKADRRGEGEQLSSTLGDLAEEDLLPVARAFNQFLNLANIAEQYQLIHRRDTDQPEPFEARVLPELLARLKAAGHGNDALARQLARLDIQLVLTAHPTEVARRTLIQKYDAIAAQLAAQDHRDLIPAERQQVRERLRRLIAEAWHTEEIRRTRPTPVDEAKWGFAVIEHSLWQAVPNHLRKVDKALFEATGLRLPLESAPVRFASWMGGDRDGNPNVTAAVTREVLLLARWMAADLFLRDIDYLAAELSMQQASGALREQVGDSAEPYRALLKQLRDRLRATRAWAHASLAGPQPASAAVLVDNRDLIAPLELCYQSLHACGMGVIADGPLLDSLRRAVTFGLFLVRLDVRQDAARHRDALSEITDYLGLGRYADWDEERRIEFLQHELKNRRPLLPAHFKPAAETAEVLATCREIAAAPAASLGSYVISMAGAASDVLAVQLLLKEAGLTRPMRVVPLFETLADLDNAGPVMERLLGLPGYRAGLHGPQEVMIGYSDSAKDAGTTAAAWAQYRAQENLVRICREHQVELLLFHGRGGTVGRGGGPAHAAILSQPPGSVGGRFRTTEQGEMIRFKFGLPGIAEQNLNLYLAAVLEATLLPPPPPEPAWRALMDQLAADGVKAYRGVVRDNPEFVEYFRQSTPEQELGRLPLGSRPAKRRAGGIESLRAIPWIFGWTQTRLMLPAWLGWETALSNALARGQADLLAQMREQWPFFRTRIDMLEMVLAKADAQIAEAYDQRLVQPRLLPLGAHLRDLLSQSCQVVLGLTGQQVLLAHSPETLEFIRLRNTYLDPLHRLQAELLARSRSREAALDSPLEQALLVTVAGIAAGLRNTG</sequence>
<name>CAPP_PSEE4</name>
<dbReference type="EC" id="4.1.1.31" evidence="1"/>
<dbReference type="EMBL" id="CT573326">
    <property type="protein sequence ID" value="CAK14157.1"/>
    <property type="molecule type" value="Genomic_DNA"/>
</dbReference>
<dbReference type="RefSeq" id="WP_011532573.1">
    <property type="nucleotide sequence ID" value="NC_008027.1"/>
</dbReference>
<dbReference type="SMR" id="Q1IDV2"/>
<dbReference type="STRING" id="384676.PSEEN1264"/>
<dbReference type="GeneID" id="32804541"/>
<dbReference type="KEGG" id="pen:PSEEN1264"/>
<dbReference type="eggNOG" id="COG2352">
    <property type="taxonomic scope" value="Bacteria"/>
</dbReference>
<dbReference type="HOGENOM" id="CLU_006557_2_0_6"/>
<dbReference type="OrthoDB" id="9768133at2"/>
<dbReference type="Proteomes" id="UP000000658">
    <property type="component" value="Chromosome"/>
</dbReference>
<dbReference type="GO" id="GO:0005829">
    <property type="term" value="C:cytosol"/>
    <property type="evidence" value="ECO:0007669"/>
    <property type="project" value="TreeGrafter"/>
</dbReference>
<dbReference type="GO" id="GO:0000287">
    <property type="term" value="F:magnesium ion binding"/>
    <property type="evidence" value="ECO:0007669"/>
    <property type="project" value="UniProtKB-UniRule"/>
</dbReference>
<dbReference type="GO" id="GO:0008964">
    <property type="term" value="F:phosphoenolpyruvate carboxylase activity"/>
    <property type="evidence" value="ECO:0007669"/>
    <property type="project" value="UniProtKB-UniRule"/>
</dbReference>
<dbReference type="GO" id="GO:0015977">
    <property type="term" value="P:carbon fixation"/>
    <property type="evidence" value="ECO:0007669"/>
    <property type="project" value="UniProtKB-UniRule"/>
</dbReference>
<dbReference type="GO" id="GO:0006107">
    <property type="term" value="P:oxaloacetate metabolic process"/>
    <property type="evidence" value="ECO:0007669"/>
    <property type="project" value="UniProtKB-UniRule"/>
</dbReference>
<dbReference type="GO" id="GO:0006099">
    <property type="term" value="P:tricarboxylic acid cycle"/>
    <property type="evidence" value="ECO:0007669"/>
    <property type="project" value="InterPro"/>
</dbReference>
<dbReference type="Gene3D" id="1.20.1440.90">
    <property type="entry name" value="Phosphoenolpyruvate/pyruvate domain"/>
    <property type="match status" value="1"/>
</dbReference>
<dbReference type="HAMAP" id="MF_00595">
    <property type="entry name" value="PEPcase_type1"/>
    <property type="match status" value="1"/>
</dbReference>
<dbReference type="InterPro" id="IPR021135">
    <property type="entry name" value="PEP_COase"/>
</dbReference>
<dbReference type="InterPro" id="IPR022805">
    <property type="entry name" value="PEP_COase_bac/pln-type"/>
</dbReference>
<dbReference type="InterPro" id="IPR018129">
    <property type="entry name" value="PEP_COase_Lys_AS"/>
</dbReference>
<dbReference type="InterPro" id="IPR033129">
    <property type="entry name" value="PEPCASE_His_AS"/>
</dbReference>
<dbReference type="InterPro" id="IPR015813">
    <property type="entry name" value="Pyrv/PenolPyrv_kinase-like_dom"/>
</dbReference>
<dbReference type="NCBIfam" id="NF000584">
    <property type="entry name" value="PRK00009.1"/>
    <property type="match status" value="1"/>
</dbReference>
<dbReference type="PANTHER" id="PTHR30523">
    <property type="entry name" value="PHOSPHOENOLPYRUVATE CARBOXYLASE"/>
    <property type="match status" value="1"/>
</dbReference>
<dbReference type="PANTHER" id="PTHR30523:SF6">
    <property type="entry name" value="PHOSPHOENOLPYRUVATE CARBOXYLASE"/>
    <property type="match status" value="1"/>
</dbReference>
<dbReference type="Pfam" id="PF00311">
    <property type="entry name" value="PEPcase"/>
    <property type="match status" value="1"/>
</dbReference>
<dbReference type="PRINTS" id="PR00150">
    <property type="entry name" value="PEPCARBXLASE"/>
</dbReference>
<dbReference type="SUPFAM" id="SSF51621">
    <property type="entry name" value="Phosphoenolpyruvate/pyruvate domain"/>
    <property type="match status" value="1"/>
</dbReference>
<dbReference type="PROSITE" id="PS00781">
    <property type="entry name" value="PEPCASE_1"/>
    <property type="match status" value="1"/>
</dbReference>
<dbReference type="PROSITE" id="PS00393">
    <property type="entry name" value="PEPCASE_2"/>
    <property type="match status" value="1"/>
</dbReference>
<reference key="1">
    <citation type="journal article" date="2006" name="Nat. Biotechnol.">
        <title>Complete genome sequence of the entomopathogenic and metabolically versatile soil bacterium Pseudomonas entomophila.</title>
        <authorList>
            <person name="Vodovar N."/>
            <person name="Vallenet D."/>
            <person name="Cruveiller S."/>
            <person name="Rouy Z."/>
            <person name="Barbe V."/>
            <person name="Acosta C."/>
            <person name="Cattolico L."/>
            <person name="Jubin C."/>
            <person name="Lajus A."/>
            <person name="Segurens B."/>
            <person name="Vacherie B."/>
            <person name="Wincker P."/>
            <person name="Weissenbach J."/>
            <person name="Lemaitre B."/>
            <person name="Medigue C."/>
            <person name="Boccard F."/>
        </authorList>
    </citation>
    <scope>NUCLEOTIDE SEQUENCE [LARGE SCALE GENOMIC DNA]</scope>
    <source>
        <strain>L48</strain>
    </source>
</reference>